<dbReference type="EC" id="4.2.1.96" evidence="1"/>
<dbReference type="EMBL" id="CP000552">
    <property type="protein sequence ID" value="ABM71764.1"/>
    <property type="molecule type" value="Genomic_DNA"/>
</dbReference>
<dbReference type="RefSeq" id="WP_011819871.1">
    <property type="nucleotide sequence ID" value="NC_008817.1"/>
</dbReference>
<dbReference type="SMR" id="A2BVF3"/>
<dbReference type="STRING" id="167542.P9515_05551"/>
<dbReference type="GeneID" id="60201651"/>
<dbReference type="KEGG" id="pmc:P9515_05551"/>
<dbReference type="eggNOG" id="COG2154">
    <property type="taxonomic scope" value="Bacteria"/>
</dbReference>
<dbReference type="HOGENOM" id="CLU_081974_3_2_3"/>
<dbReference type="OrthoDB" id="9794987at2"/>
<dbReference type="Proteomes" id="UP000001589">
    <property type="component" value="Chromosome"/>
</dbReference>
<dbReference type="GO" id="GO:0008124">
    <property type="term" value="F:4-alpha-hydroxytetrahydrobiopterin dehydratase activity"/>
    <property type="evidence" value="ECO:0007669"/>
    <property type="project" value="UniProtKB-UniRule"/>
</dbReference>
<dbReference type="GO" id="GO:0006729">
    <property type="term" value="P:tetrahydrobiopterin biosynthetic process"/>
    <property type="evidence" value="ECO:0007669"/>
    <property type="project" value="InterPro"/>
</dbReference>
<dbReference type="CDD" id="cd00914">
    <property type="entry name" value="PCD_DCoH_subfamily_b"/>
    <property type="match status" value="1"/>
</dbReference>
<dbReference type="Gene3D" id="3.30.1360.20">
    <property type="entry name" value="Transcriptional coactivator/pterin dehydratase"/>
    <property type="match status" value="1"/>
</dbReference>
<dbReference type="HAMAP" id="MF_00434">
    <property type="entry name" value="Pterin_4_alpha"/>
    <property type="match status" value="1"/>
</dbReference>
<dbReference type="InterPro" id="IPR036428">
    <property type="entry name" value="PCD_sf"/>
</dbReference>
<dbReference type="InterPro" id="IPR001533">
    <property type="entry name" value="Pterin_deHydtase"/>
</dbReference>
<dbReference type="NCBIfam" id="NF002017">
    <property type="entry name" value="PRK00823.1-2"/>
    <property type="match status" value="1"/>
</dbReference>
<dbReference type="NCBIfam" id="NF002018">
    <property type="entry name" value="PRK00823.1-3"/>
    <property type="match status" value="1"/>
</dbReference>
<dbReference type="PANTHER" id="PTHR12599">
    <property type="entry name" value="PTERIN-4-ALPHA-CARBINOLAMINE DEHYDRATASE"/>
    <property type="match status" value="1"/>
</dbReference>
<dbReference type="PANTHER" id="PTHR12599:SF0">
    <property type="entry name" value="PTERIN-4-ALPHA-CARBINOLAMINE DEHYDRATASE"/>
    <property type="match status" value="1"/>
</dbReference>
<dbReference type="Pfam" id="PF01329">
    <property type="entry name" value="Pterin_4a"/>
    <property type="match status" value="1"/>
</dbReference>
<dbReference type="SUPFAM" id="SSF55248">
    <property type="entry name" value="PCD-like"/>
    <property type="match status" value="1"/>
</dbReference>
<sequence>MKPHLLQNEELKELIAKIPGWEIISNHLEREFNFGDFIEAFSFMTKIALICEKYNHHPNWENVYSKVIIKLSTHDLGGITNLDQKIASEINEIFEK</sequence>
<protein>
    <recommendedName>
        <fullName evidence="1">Putative pterin-4-alpha-carbinolamine dehydratase</fullName>
        <shortName evidence="1">PHS</shortName>
        <ecNumber evidence="1">4.2.1.96</ecNumber>
    </recommendedName>
    <alternativeName>
        <fullName evidence="1">4-alpha-hydroxy-tetrahydropterin dehydratase</fullName>
    </alternativeName>
    <alternativeName>
        <fullName evidence="1">Pterin carbinolamine dehydratase</fullName>
        <shortName evidence="1">PCD</shortName>
    </alternativeName>
</protein>
<organism>
    <name type="scientific">Prochlorococcus marinus (strain MIT 9515)</name>
    <dbReference type="NCBI Taxonomy" id="167542"/>
    <lineage>
        <taxon>Bacteria</taxon>
        <taxon>Bacillati</taxon>
        <taxon>Cyanobacteriota</taxon>
        <taxon>Cyanophyceae</taxon>
        <taxon>Synechococcales</taxon>
        <taxon>Prochlorococcaceae</taxon>
        <taxon>Prochlorococcus</taxon>
    </lineage>
</organism>
<comment type="catalytic activity">
    <reaction evidence="1">
        <text>(4aS,6R)-4a-hydroxy-L-erythro-5,6,7,8-tetrahydrobiopterin = (6R)-L-erythro-6,7-dihydrobiopterin + H2O</text>
        <dbReference type="Rhea" id="RHEA:11920"/>
        <dbReference type="ChEBI" id="CHEBI:15377"/>
        <dbReference type="ChEBI" id="CHEBI:15642"/>
        <dbReference type="ChEBI" id="CHEBI:43120"/>
        <dbReference type="EC" id="4.2.1.96"/>
    </reaction>
</comment>
<comment type="similarity">
    <text evidence="1">Belongs to the pterin-4-alpha-carbinolamine dehydratase family.</text>
</comment>
<feature type="chain" id="PRO_1000050433" description="Putative pterin-4-alpha-carbinolamine dehydratase">
    <location>
        <begin position="1"/>
        <end position="96"/>
    </location>
</feature>
<proteinExistence type="inferred from homology"/>
<keyword id="KW-0456">Lyase</keyword>
<evidence type="ECO:0000255" key="1">
    <source>
        <dbReference type="HAMAP-Rule" id="MF_00434"/>
    </source>
</evidence>
<accession>A2BVF3</accession>
<gene>
    <name type="ordered locus">P9515_05551</name>
</gene>
<reference key="1">
    <citation type="journal article" date="2007" name="PLoS Genet.">
        <title>Patterns and implications of gene gain and loss in the evolution of Prochlorococcus.</title>
        <authorList>
            <person name="Kettler G.C."/>
            <person name="Martiny A.C."/>
            <person name="Huang K."/>
            <person name="Zucker J."/>
            <person name="Coleman M.L."/>
            <person name="Rodrigue S."/>
            <person name="Chen F."/>
            <person name="Lapidus A."/>
            <person name="Ferriera S."/>
            <person name="Johnson J."/>
            <person name="Steglich C."/>
            <person name="Church G.M."/>
            <person name="Richardson P."/>
            <person name="Chisholm S.W."/>
        </authorList>
    </citation>
    <scope>NUCLEOTIDE SEQUENCE [LARGE SCALE GENOMIC DNA]</scope>
    <source>
        <strain>MIT 9515</strain>
    </source>
</reference>
<name>PHS_PROM5</name>